<sequence length="334" mass="36268">MKEKIAYLGMGIWGFCLASLLANKGYRVVGWARNPDLIAQLQIEKRHPQAPDIPLHPNLSFTTDMEEAVNEASMIVEGVSSAGIRPVSEQLKAITDLKVPFVITSKGIEQHTGLLLSEIVVEIFGNNASQYLGYLSGPSIAREVLKGCPCSVVISAYNPDTLKKIHNAFLTPTFRVYPNSDLKGVALGGALKNIIAIACGISDGFHFGDNAKSGLVTRGLHEIRKFATIMDCRPDTLNGLAGLGDLCTTCFSSLSRNTKFGKLIAQGLTLEQAKAEIGMVVEGAYTALSAYQIAKHHKIDMPITTGIYRVLYENLDIKEGIAALLQRNTKEEYL</sequence>
<organism>
    <name type="scientific">Chlamydia felis (strain Fe/C-56)</name>
    <name type="common">Chlamydophila felis</name>
    <dbReference type="NCBI Taxonomy" id="264202"/>
    <lineage>
        <taxon>Bacteria</taxon>
        <taxon>Pseudomonadati</taxon>
        <taxon>Chlamydiota</taxon>
        <taxon>Chlamydiia</taxon>
        <taxon>Chlamydiales</taxon>
        <taxon>Chlamydiaceae</taxon>
        <taxon>Chlamydia/Chlamydophila group</taxon>
        <taxon>Chlamydia</taxon>
    </lineage>
</organism>
<accession>Q256B4</accession>
<comment type="function">
    <text evidence="1">Catalyzes the reduction of the glycolytic intermediate dihydroxyacetone phosphate (DHAP) to sn-glycerol 3-phosphate (G3P), the key precursor for phospholipid synthesis.</text>
</comment>
<comment type="catalytic activity">
    <reaction evidence="1">
        <text>sn-glycerol 3-phosphate + NAD(+) = dihydroxyacetone phosphate + NADH + H(+)</text>
        <dbReference type="Rhea" id="RHEA:11092"/>
        <dbReference type="ChEBI" id="CHEBI:15378"/>
        <dbReference type="ChEBI" id="CHEBI:57540"/>
        <dbReference type="ChEBI" id="CHEBI:57597"/>
        <dbReference type="ChEBI" id="CHEBI:57642"/>
        <dbReference type="ChEBI" id="CHEBI:57945"/>
        <dbReference type="EC" id="1.1.1.94"/>
    </reaction>
    <physiologicalReaction direction="right-to-left" evidence="1">
        <dbReference type="Rhea" id="RHEA:11094"/>
    </physiologicalReaction>
</comment>
<comment type="catalytic activity">
    <reaction evidence="1">
        <text>sn-glycerol 3-phosphate + NADP(+) = dihydroxyacetone phosphate + NADPH + H(+)</text>
        <dbReference type="Rhea" id="RHEA:11096"/>
        <dbReference type="ChEBI" id="CHEBI:15378"/>
        <dbReference type="ChEBI" id="CHEBI:57597"/>
        <dbReference type="ChEBI" id="CHEBI:57642"/>
        <dbReference type="ChEBI" id="CHEBI:57783"/>
        <dbReference type="ChEBI" id="CHEBI:58349"/>
        <dbReference type="EC" id="1.1.1.94"/>
    </reaction>
    <physiologicalReaction direction="right-to-left" evidence="1">
        <dbReference type="Rhea" id="RHEA:11098"/>
    </physiologicalReaction>
</comment>
<comment type="pathway">
    <text evidence="1">Membrane lipid metabolism; glycerophospholipid metabolism.</text>
</comment>
<comment type="subcellular location">
    <subcellularLocation>
        <location evidence="1">Cytoplasm</location>
    </subcellularLocation>
</comment>
<comment type="similarity">
    <text evidence="1">Belongs to the NAD-dependent glycerol-3-phosphate dehydrogenase family.</text>
</comment>
<keyword id="KW-0963">Cytoplasm</keyword>
<keyword id="KW-0444">Lipid biosynthesis</keyword>
<keyword id="KW-0443">Lipid metabolism</keyword>
<keyword id="KW-0520">NAD</keyword>
<keyword id="KW-0521">NADP</keyword>
<keyword id="KW-0547">Nucleotide-binding</keyword>
<keyword id="KW-0560">Oxidoreductase</keyword>
<keyword id="KW-0594">Phospholipid biosynthesis</keyword>
<keyword id="KW-1208">Phospholipid metabolism</keyword>
<dbReference type="EC" id="1.1.1.94" evidence="1"/>
<dbReference type="EMBL" id="AP006861">
    <property type="protein sequence ID" value="BAE80874.1"/>
    <property type="molecule type" value="Genomic_DNA"/>
</dbReference>
<dbReference type="RefSeq" id="WP_011457659.1">
    <property type="nucleotide sequence ID" value="NC_007899.1"/>
</dbReference>
<dbReference type="SMR" id="Q256B4"/>
<dbReference type="STRING" id="264202.CF0102"/>
<dbReference type="KEGG" id="cfe:CF0102"/>
<dbReference type="eggNOG" id="COG0240">
    <property type="taxonomic scope" value="Bacteria"/>
</dbReference>
<dbReference type="HOGENOM" id="CLU_033449_0_2_0"/>
<dbReference type="OrthoDB" id="9812273at2"/>
<dbReference type="UniPathway" id="UPA00940"/>
<dbReference type="Proteomes" id="UP000001260">
    <property type="component" value="Chromosome"/>
</dbReference>
<dbReference type="GO" id="GO:0005829">
    <property type="term" value="C:cytosol"/>
    <property type="evidence" value="ECO:0007669"/>
    <property type="project" value="TreeGrafter"/>
</dbReference>
<dbReference type="GO" id="GO:0047952">
    <property type="term" value="F:glycerol-3-phosphate dehydrogenase [NAD(P)+] activity"/>
    <property type="evidence" value="ECO:0007669"/>
    <property type="project" value="UniProtKB-UniRule"/>
</dbReference>
<dbReference type="GO" id="GO:0051287">
    <property type="term" value="F:NAD binding"/>
    <property type="evidence" value="ECO:0007669"/>
    <property type="project" value="InterPro"/>
</dbReference>
<dbReference type="GO" id="GO:0005975">
    <property type="term" value="P:carbohydrate metabolic process"/>
    <property type="evidence" value="ECO:0007669"/>
    <property type="project" value="InterPro"/>
</dbReference>
<dbReference type="GO" id="GO:0046167">
    <property type="term" value="P:glycerol-3-phosphate biosynthetic process"/>
    <property type="evidence" value="ECO:0007669"/>
    <property type="project" value="UniProtKB-UniRule"/>
</dbReference>
<dbReference type="GO" id="GO:0046168">
    <property type="term" value="P:glycerol-3-phosphate catabolic process"/>
    <property type="evidence" value="ECO:0007669"/>
    <property type="project" value="InterPro"/>
</dbReference>
<dbReference type="GO" id="GO:0006650">
    <property type="term" value="P:glycerophospholipid metabolic process"/>
    <property type="evidence" value="ECO:0007669"/>
    <property type="project" value="UniProtKB-UniRule"/>
</dbReference>
<dbReference type="GO" id="GO:0008654">
    <property type="term" value="P:phospholipid biosynthetic process"/>
    <property type="evidence" value="ECO:0007669"/>
    <property type="project" value="UniProtKB-KW"/>
</dbReference>
<dbReference type="FunFam" id="1.10.1040.10:FF:000001">
    <property type="entry name" value="Glycerol-3-phosphate dehydrogenase [NAD(P)+]"/>
    <property type="match status" value="1"/>
</dbReference>
<dbReference type="Gene3D" id="1.10.1040.10">
    <property type="entry name" value="N-(1-d-carboxylethyl)-l-norvaline Dehydrogenase, domain 2"/>
    <property type="match status" value="1"/>
</dbReference>
<dbReference type="Gene3D" id="3.40.50.720">
    <property type="entry name" value="NAD(P)-binding Rossmann-like Domain"/>
    <property type="match status" value="1"/>
</dbReference>
<dbReference type="HAMAP" id="MF_00394">
    <property type="entry name" value="NAD_Glyc3P_dehydrog"/>
    <property type="match status" value="1"/>
</dbReference>
<dbReference type="InterPro" id="IPR008927">
    <property type="entry name" value="6-PGluconate_DH-like_C_sf"/>
</dbReference>
<dbReference type="InterPro" id="IPR013328">
    <property type="entry name" value="6PGD_dom2"/>
</dbReference>
<dbReference type="InterPro" id="IPR006168">
    <property type="entry name" value="G3P_DH_NAD-dep"/>
</dbReference>
<dbReference type="InterPro" id="IPR006109">
    <property type="entry name" value="G3P_DH_NAD-dep_C"/>
</dbReference>
<dbReference type="InterPro" id="IPR011128">
    <property type="entry name" value="G3P_DH_NAD-dep_N"/>
</dbReference>
<dbReference type="InterPro" id="IPR036291">
    <property type="entry name" value="NAD(P)-bd_dom_sf"/>
</dbReference>
<dbReference type="NCBIfam" id="NF000940">
    <property type="entry name" value="PRK00094.1-2"/>
    <property type="match status" value="1"/>
</dbReference>
<dbReference type="NCBIfam" id="NF000942">
    <property type="entry name" value="PRK00094.1-4"/>
    <property type="match status" value="1"/>
</dbReference>
<dbReference type="PANTHER" id="PTHR11728">
    <property type="entry name" value="GLYCEROL-3-PHOSPHATE DEHYDROGENASE"/>
    <property type="match status" value="1"/>
</dbReference>
<dbReference type="PANTHER" id="PTHR11728:SF1">
    <property type="entry name" value="GLYCEROL-3-PHOSPHATE DEHYDROGENASE [NAD(+)] 2, CHLOROPLASTIC"/>
    <property type="match status" value="1"/>
</dbReference>
<dbReference type="Pfam" id="PF07479">
    <property type="entry name" value="NAD_Gly3P_dh_C"/>
    <property type="match status" value="1"/>
</dbReference>
<dbReference type="Pfam" id="PF01210">
    <property type="entry name" value="NAD_Gly3P_dh_N"/>
    <property type="match status" value="1"/>
</dbReference>
<dbReference type="PIRSF" id="PIRSF000114">
    <property type="entry name" value="Glycerol-3-P_dh"/>
    <property type="match status" value="1"/>
</dbReference>
<dbReference type="PRINTS" id="PR00077">
    <property type="entry name" value="GPDHDRGNASE"/>
</dbReference>
<dbReference type="SUPFAM" id="SSF48179">
    <property type="entry name" value="6-phosphogluconate dehydrogenase C-terminal domain-like"/>
    <property type="match status" value="1"/>
</dbReference>
<dbReference type="SUPFAM" id="SSF51735">
    <property type="entry name" value="NAD(P)-binding Rossmann-fold domains"/>
    <property type="match status" value="1"/>
</dbReference>
<dbReference type="PROSITE" id="PS00957">
    <property type="entry name" value="NAD_G3PDH"/>
    <property type="match status" value="1"/>
</dbReference>
<gene>
    <name evidence="1" type="primary">gpsA</name>
    <name type="ordered locus">CF0102</name>
</gene>
<reference key="1">
    <citation type="journal article" date="2006" name="DNA Res.">
        <title>Genome sequence of the cat pathogen, Chlamydophila felis.</title>
        <authorList>
            <person name="Azuma Y."/>
            <person name="Hirakawa H."/>
            <person name="Yamashita A."/>
            <person name="Cai Y."/>
            <person name="Rahman M.A."/>
            <person name="Suzuki H."/>
            <person name="Mitaku S."/>
            <person name="Toh H."/>
            <person name="Goto S."/>
            <person name="Murakami T."/>
            <person name="Sugi K."/>
            <person name="Hayashi H."/>
            <person name="Fukushi H."/>
            <person name="Hattori M."/>
            <person name="Kuhara S."/>
            <person name="Shirai M."/>
        </authorList>
    </citation>
    <scope>NUCLEOTIDE SEQUENCE [LARGE SCALE GENOMIC DNA]</scope>
    <source>
        <strain>Fe/C-56</strain>
    </source>
</reference>
<evidence type="ECO:0000255" key="1">
    <source>
        <dbReference type="HAMAP-Rule" id="MF_00394"/>
    </source>
</evidence>
<proteinExistence type="inferred from homology"/>
<protein>
    <recommendedName>
        <fullName evidence="1">Glycerol-3-phosphate dehydrogenase [NAD(P)+]</fullName>
        <ecNumber evidence="1">1.1.1.94</ecNumber>
    </recommendedName>
    <alternativeName>
        <fullName evidence="1">NAD(P)(+)-dependent glycerol-3-phosphate dehydrogenase</fullName>
    </alternativeName>
    <alternativeName>
        <fullName evidence="1">NAD(P)H-dependent dihydroxyacetone-phosphate reductase</fullName>
    </alternativeName>
</protein>
<name>GPDA_CHLFF</name>
<feature type="chain" id="PRO_0000255297" description="Glycerol-3-phosphate dehydrogenase [NAD(P)+]">
    <location>
        <begin position="1"/>
        <end position="334"/>
    </location>
</feature>
<feature type="active site" description="Proton acceptor" evidence="1">
    <location>
        <position position="192"/>
    </location>
</feature>
<feature type="binding site" evidence="1">
    <location>
        <position position="13"/>
    </location>
    <ligand>
        <name>NADPH</name>
        <dbReference type="ChEBI" id="CHEBI:57783"/>
    </ligand>
</feature>
<feature type="binding site" evidence="1">
    <location>
        <position position="33"/>
    </location>
    <ligand>
        <name>NADPH</name>
        <dbReference type="ChEBI" id="CHEBI:57783"/>
    </ligand>
</feature>
<feature type="binding site" evidence="1">
    <location>
        <position position="106"/>
    </location>
    <ligand>
        <name>NADPH</name>
        <dbReference type="ChEBI" id="CHEBI:57783"/>
    </ligand>
</feature>
<feature type="binding site" evidence="1">
    <location>
        <position position="106"/>
    </location>
    <ligand>
        <name>sn-glycerol 3-phosphate</name>
        <dbReference type="ChEBI" id="CHEBI:57597"/>
    </ligand>
</feature>
<feature type="binding site" evidence="1">
    <location>
        <position position="137"/>
    </location>
    <ligand>
        <name>sn-glycerol 3-phosphate</name>
        <dbReference type="ChEBI" id="CHEBI:57597"/>
    </ligand>
</feature>
<feature type="binding site" evidence="1">
    <location>
        <position position="139"/>
    </location>
    <ligand>
        <name>sn-glycerol 3-phosphate</name>
        <dbReference type="ChEBI" id="CHEBI:57597"/>
    </ligand>
</feature>
<feature type="binding site" evidence="1">
    <location>
        <position position="141"/>
    </location>
    <ligand>
        <name>NADPH</name>
        <dbReference type="ChEBI" id="CHEBI:57783"/>
    </ligand>
</feature>
<feature type="binding site" evidence="1">
    <location>
        <position position="192"/>
    </location>
    <ligand>
        <name>sn-glycerol 3-phosphate</name>
        <dbReference type="ChEBI" id="CHEBI:57597"/>
    </ligand>
</feature>
<feature type="binding site" evidence="1">
    <location>
        <position position="245"/>
    </location>
    <ligand>
        <name>sn-glycerol 3-phosphate</name>
        <dbReference type="ChEBI" id="CHEBI:57597"/>
    </ligand>
</feature>
<feature type="binding site" evidence="1">
    <location>
        <position position="255"/>
    </location>
    <ligand>
        <name>sn-glycerol 3-phosphate</name>
        <dbReference type="ChEBI" id="CHEBI:57597"/>
    </ligand>
</feature>
<feature type="binding site" evidence="1">
    <location>
        <position position="256"/>
    </location>
    <ligand>
        <name>NADPH</name>
        <dbReference type="ChEBI" id="CHEBI:57783"/>
    </ligand>
</feature>
<feature type="binding site" evidence="1">
    <location>
        <position position="256"/>
    </location>
    <ligand>
        <name>sn-glycerol 3-phosphate</name>
        <dbReference type="ChEBI" id="CHEBI:57597"/>
    </ligand>
</feature>
<feature type="binding site" evidence="1">
    <location>
        <position position="257"/>
    </location>
    <ligand>
        <name>sn-glycerol 3-phosphate</name>
        <dbReference type="ChEBI" id="CHEBI:57597"/>
    </ligand>
</feature>
<feature type="binding site" evidence="1">
    <location>
        <position position="280"/>
    </location>
    <ligand>
        <name>NADPH</name>
        <dbReference type="ChEBI" id="CHEBI:57783"/>
    </ligand>
</feature>
<feature type="binding site" evidence="1">
    <location>
        <position position="282"/>
    </location>
    <ligand>
        <name>NADPH</name>
        <dbReference type="ChEBI" id="CHEBI:57783"/>
    </ligand>
</feature>